<reference key="1">
    <citation type="journal article" date="2008" name="Proc. Natl. Acad. Sci. U.S.A.">
        <title>The orphan G protein-coupled receptor, Gpr161, encodes the vacuolated lens locus and controls neurulation and lens development.</title>
        <authorList>
            <person name="Matteson P.G."/>
            <person name="Desai J."/>
            <person name="Korstanje R."/>
            <person name="Lazar G."/>
            <person name="Borsuk T.E."/>
            <person name="Rollins J."/>
            <person name="Kadambi S."/>
            <person name="Joseph J."/>
            <person name="Rahman T."/>
            <person name="Wink J."/>
            <person name="Benayed R."/>
            <person name="Paigen B."/>
            <person name="Millonig J.H."/>
        </authorList>
    </citation>
    <scope>NUCLEOTIDE SEQUENCE [MRNA] (ISOFORM 1)</scope>
    <scope>FUNCTION</scope>
    <scope>SUBCELLULAR LOCATION</scope>
    <scope>INVOLVEMENT IN VL PHENOTYPE</scope>
</reference>
<reference key="2">
    <citation type="journal article" date="2009" name="PLoS Biol.">
        <title>Lineage-specific biology revealed by a finished genome assembly of the mouse.</title>
        <authorList>
            <person name="Church D.M."/>
            <person name="Goodstadt L."/>
            <person name="Hillier L.W."/>
            <person name="Zody M.C."/>
            <person name="Goldstein S."/>
            <person name="She X."/>
            <person name="Bult C.J."/>
            <person name="Agarwala R."/>
            <person name="Cherry J.L."/>
            <person name="DiCuccio M."/>
            <person name="Hlavina W."/>
            <person name="Kapustin Y."/>
            <person name="Meric P."/>
            <person name="Maglott D."/>
            <person name="Birtle Z."/>
            <person name="Marques A.C."/>
            <person name="Graves T."/>
            <person name="Zhou S."/>
            <person name="Teague B."/>
            <person name="Potamousis K."/>
            <person name="Churas C."/>
            <person name="Place M."/>
            <person name="Herschleb J."/>
            <person name="Runnheim R."/>
            <person name="Forrest D."/>
            <person name="Amos-Landgraf J."/>
            <person name="Schwartz D.C."/>
            <person name="Cheng Z."/>
            <person name="Lindblad-Toh K."/>
            <person name="Eichler E.E."/>
            <person name="Ponting C.P."/>
        </authorList>
    </citation>
    <scope>NUCLEOTIDE SEQUENCE [LARGE SCALE GENOMIC DNA]</scope>
    <source>
        <strain>C57BL/6J</strain>
    </source>
</reference>
<reference key="3">
    <citation type="journal article" date="2004" name="Genome Res.">
        <title>The status, quality, and expansion of the NIH full-length cDNA project: the Mammalian Gene Collection (MGC).</title>
        <authorList>
            <consortium name="The MGC Project Team"/>
        </authorList>
    </citation>
    <scope>NUCLEOTIDE SEQUENCE [LARGE SCALE MRNA] (ISOFORM 2)</scope>
    <source>
        <tissue>Brain</tissue>
    </source>
</reference>
<reference key="4">
    <citation type="journal article" date="2003" name="Proc. Natl. Acad. Sci. U.S.A.">
        <title>The G protein-coupled receptor repertoires of human and mouse.</title>
        <authorList>
            <person name="Vassilatis D.K."/>
            <person name="Hohmann J.G."/>
            <person name="Zeng H."/>
            <person name="Li F."/>
            <person name="Ranchalis J.E."/>
            <person name="Mortrud M.T."/>
            <person name="Brown A."/>
            <person name="Rodriguez S.S."/>
            <person name="Weller J.R."/>
            <person name="Wright A.C."/>
            <person name="Bergmann J.E."/>
            <person name="Gaitanaris G.A."/>
        </authorList>
    </citation>
    <scope>NUCLEOTIDE SEQUENCE [LARGE SCALE MRNA] OF 119-266</scope>
</reference>
<reference key="5">
    <citation type="journal article" date="2013" name="Cell">
        <title>The ciliary G-protein-coupled receptor Gpr161 negatively regulates the Sonic Hedgehog pathway via cAMP signaling.</title>
        <authorList>
            <person name="Mukhopadhyay S."/>
            <person name="Wen X."/>
            <person name="Ratti N."/>
            <person name="Loktev A."/>
            <person name="Rangell L."/>
            <person name="Scales S.J."/>
            <person name="Jackson P.K."/>
        </authorList>
    </citation>
    <scope>FUNCTION</scope>
    <scope>SUBCELLULAR LOCATION</scope>
    <scope>DEVELOPMENTAL STAGE</scope>
    <scope>DISRUPTION PHENOTYPE</scope>
    <scope>MUTAGENESIS OF VAL-145; 233-VAL--LYS-237; 238-VAL--GLY-241; 243-VAL-VAL-244; GLN-251; 254-GLY--ASN-257 AND 258-SER--THR-262</scope>
</reference>
<protein>
    <recommendedName>
        <fullName>G-protein coupled receptor 161</fullName>
    </recommendedName>
</protein>
<organism>
    <name type="scientific">Mus musculus</name>
    <name type="common">Mouse</name>
    <dbReference type="NCBI Taxonomy" id="10090"/>
    <lineage>
        <taxon>Eukaryota</taxon>
        <taxon>Metazoa</taxon>
        <taxon>Chordata</taxon>
        <taxon>Craniata</taxon>
        <taxon>Vertebrata</taxon>
        <taxon>Euteleostomi</taxon>
        <taxon>Mammalia</taxon>
        <taxon>Eutheria</taxon>
        <taxon>Euarchontoglires</taxon>
        <taxon>Glires</taxon>
        <taxon>Rodentia</taxon>
        <taxon>Myomorpha</taxon>
        <taxon>Muroidea</taxon>
        <taxon>Muridae</taxon>
        <taxon>Murinae</taxon>
        <taxon>Mus</taxon>
        <taxon>Mus</taxon>
    </lineage>
</organism>
<comment type="function">
    <text evidence="3 4">Key negative regulator of Shh signaling, which promotes the processing of GLI3 into GLI3R during neural tube development. Recruited by TULP3 and the IFT-A complex to primary cilia and acts as a regulator of the PKA-dependent basal repression machinery in Shh signaling by increasing cAMP levels, leading to promote the PKA-dependent processing of GLI3 into GLI3R and repress the Shh signaling. In presence of SHH, it is removed from primary cilia and is internalized into recycling endosomes, preventing its activity and allowing activation of the Shh signaling. Its ligand is unknown.</text>
</comment>
<comment type="subcellular location">
    <subcellularLocation>
        <location>Cell projection</location>
        <location>Cilium membrane</location>
        <topology>Multi-pass membrane protein</topology>
    </subcellularLocation>
    <subcellularLocation>
        <location>Cell membrane</location>
        <topology>Multi-pass membrane protein</topology>
    </subcellularLocation>
    <text>Mainly localizes to primary cilium in a TULP3 and IFT-A complex-dependent manner. In presence of SHH, it is removed from primary cilia and is internalized into recycling endosomes and is apparently not degraded.</text>
</comment>
<comment type="alternative products">
    <event type="alternative splicing"/>
    <isoform>
        <id>B2RPY5-1</id>
        <name>1</name>
        <sequence type="displayed"/>
    </isoform>
    <isoform>
        <id>B2RPY5-2</id>
        <name>2</name>
        <sequence type="described" ref="VSP_037635"/>
    </isoform>
    <isoform>
        <id>B2RPY5-3</id>
        <name>3</name>
        <sequence type="described" ref="VSP_046300"/>
    </isoform>
</comment>
<comment type="developmental stage">
    <text evidence="4">Expressed ubiquitously from 8.5 dpc and is mostly concentrated in the developing nervous system at later stages. By 10.5 dpc, it is mainly expressed in the neural tube. At later embryonic stages (12.5 dpc and 15.5 dpc), it is predominantly expressed in the brain, spinal cord, and dorsal ganglia and weakly expressed in the hindlimb. According to PubMed:18250320, expression is restricted to the lateral neural folds, while PubMed:23332756 detects expression throughout the neural tube. Also expressed at low levels in kidney stroma and retina at 15.5 dpc.</text>
</comment>
<comment type="disease">
    <text evidence="3 4">An intragenic deletion in Gpr161 is responsible for the vacuolated lens (vl) phenotype that is characterized by neural tube defects and congenital cataracts. The vl mutation aroses spontaneously. About half of vl/vl embryos display lumbar-sacral spina bifida and die before birth, and the other half have closed neural tubes but show thinning of the midline neuroepithelium and epidermis, dilation of the dorsal ventricle, and presence of ectopic neuroepithelial cells in the ventricle. All surviving adults display congenital cataracts (PubMed:18250320). It is not a null mutant allele (PubMed:23332756).</text>
</comment>
<comment type="disruption phenotype">
    <text evidence="4">Embryonic lethality by 10.5 dpc caused by increased Shh signaling and ventralization throughout the developing neural tube. Defects in Gli3 processing.</text>
</comment>
<comment type="similarity">
    <text evidence="2">Belongs to the G-protein coupled receptor 1 family.</text>
</comment>
<evidence type="ECO:0000255" key="1"/>
<evidence type="ECO:0000255" key="2">
    <source>
        <dbReference type="PROSITE-ProRule" id="PRU00521"/>
    </source>
</evidence>
<evidence type="ECO:0000269" key="3">
    <source>
    </source>
</evidence>
<evidence type="ECO:0000269" key="4">
    <source>
    </source>
</evidence>
<evidence type="ECO:0000303" key="5">
    <source>
    </source>
</evidence>
<evidence type="ECO:0000305" key="6"/>
<gene>
    <name type="primary">Gpr161</name>
    <name type="synonym">Gm208</name>
</gene>
<accession>B2RPY5</accession>
<accession>B0L0L8</accession>
<accession>J3QN69</accession>
<accession>Q80T48</accession>
<keyword id="KW-0025">Alternative splicing</keyword>
<keyword id="KW-0898">Cataract</keyword>
<keyword id="KW-1003">Cell membrane</keyword>
<keyword id="KW-0966">Cell projection</keyword>
<keyword id="KW-0969">Cilium</keyword>
<keyword id="KW-0217">Developmental protein</keyword>
<keyword id="KW-1015">Disulfide bond</keyword>
<keyword id="KW-0297">G-protein coupled receptor</keyword>
<keyword id="KW-0325">Glycoprotein</keyword>
<keyword id="KW-0472">Membrane</keyword>
<keyword id="KW-0675">Receptor</keyword>
<keyword id="KW-1185">Reference proteome</keyword>
<keyword id="KW-0807">Transducer</keyword>
<keyword id="KW-0812">Transmembrane</keyword>
<keyword id="KW-1133">Transmembrane helix</keyword>
<sequence>MDFVQHALLTASRGALTMSLNSSLSYRKELSNLTATEGGEGGAVSEFIAIIIITVLVCLGNLVIVVTLYKKSYLLTLSNKFVFSLTLSNFLLSVLVLPFVVTSSIRREWIFGVVWCNFSALLYLLISSASMLTLGVIAIDRYYAVLYPMVYPMKITGNRAVMALVYIWLHSLIGCLPPLFGWSSVEFDEFKWMCVAAWHQEPGYTIFWQIWCALFPFLIMLVCYGFIFRVARVKARKVHCGTVVTVEEDSQRSGRKNSSTSTSSSGSRRNALQGVVYSANQCKALITILVVIGAFMVTWGPYMVVITSEALWGKNCVSPTLETWATWLSFTSAICHPLIYGLWNKTVRKELLGMCFGDRYYRESFVQRQRTSRLFSISNRITDLGLSPHLTALMAGGQSLGHSSSTGDTGFSYSQDSGTDVMLLEDGTSEDNPPQHCTCPPKRRSSVTFEDEVEQIKEAAKNSLLHVKAEVHKSLDSYAASLAKAIEAEAKINLFGEEALPGVLFTARTVPGAGFGGRRGSRTLVNQRLQLQSIKEGNVLAAEQR</sequence>
<name>GP161_MOUSE</name>
<dbReference type="EMBL" id="EF197953">
    <property type="protein sequence ID" value="ABO93465.1"/>
    <property type="molecule type" value="mRNA"/>
</dbReference>
<dbReference type="EMBL" id="AC116374">
    <property type="status" value="NOT_ANNOTATED_CDS"/>
    <property type="molecule type" value="Genomic_DNA"/>
</dbReference>
<dbReference type="EMBL" id="BC137659">
    <property type="protein sequence ID" value="AAI37660.1"/>
    <property type="molecule type" value="mRNA"/>
</dbReference>
<dbReference type="EMBL" id="AY255596">
    <property type="protein sequence ID" value="AAO85108.1"/>
    <property type="molecule type" value="mRNA"/>
</dbReference>
<dbReference type="CCDS" id="CCDS83621.1">
    <molecule id="B2RPY5-1"/>
</dbReference>
<dbReference type="RefSeq" id="NP_001074595.1">
    <molecule id="B2RPY5-3"/>
    <property type="nucleotide sequence ID" value="NM_001081126.2"/>
</dbReference>
<dbReference type="RefSeq" id="NP_001297358.1">
    <molecule id="B2RPY5-1"/>
    <property type="nucleotide sequence ID" value="NM_001310429.1"/>
</dbReference>
<dbReference type="RefSeq" id="NP_001297359.1">
    <property type="nucleotide sequence ID" value="NM_001310430.1"/>
</dbReference>
<dbReference type="RefSeq" id="XP_006496913.1">
    <property type="nucleotide sequence ID" value="XM_006496850.3"/>
</dbReference>
<dbReference type="RefSeq" id="XP_006496914.1">
    <property type="nucleotide sequence ID" value="XM_006496851.3"/>
</dbReference>
<dbReference type="RefSeq" id="XP_006496915.1">
    <property type="nucleotide sequence ID" value="XM_006496852.3"/>
</dbReference>
<dbReference type="RefSeq" id="XP_011237123.1">
    <property type="nucleotide sequence ID" value="XM_011238821.2"/>
</dbReference>
<dbReference type="SMR" id="B2RPY5"/>
<dbReference type="BioGRID" id="232252">
    <property type="interactions" value="1"/>
</dbReference>
<dbReference type="FunCoup" id="B2RPY5">
    <property type="interactions" value="472"/>
</dbReference>
<dbReference type="STRING" id="10090.ENSMUSP00000136621"/>
<dbReference type="GlyCosmos" id="B2RPY5">
    <property type="glycosylation" value="3 sites, No reported glycans"/>
</dbReference>
<dbReference type="GlyGen" id="B2RPY5">
    <property type="glycosylation" value="3 sites"/>
</dbReference>
<dbReference type="iPTMnet" id="B2RPY5"/>
<dbReference type="PhosphoSitePlus" id="B2RPY5"/>
<dbReference type="SwissPalm" id="B2RPY5"/>
<dbReference type="PaxDb" id="10090-ENSMUSP00000136621"/>
<dbReference type="ProteomicsDB" id="271136">
    <molecule id="B2RPY5-1"/>
</dbReference>
<dbReference type="ProteomicsDB" id="271137">
    <molecule id="B2RPY5-2"/>
</dbReference>
<dbReference type="ProteomicsDB" id="271138">
    <molecule id="B2RPY5-3"/>
</dbReference>
<dbReference type="Pumba" id="B2RPY5"/>
<dbReference type="Antibodypedia" id="2941">
    <property type="antibodies" value="273 antibodies from 32 providers"/>
</dbReference>
<dbReference type="Ensembl" id="ENSMUST00000178700.8">
    <molecule id="B2RPY5-1"/>
    <property type="protein sequence ID" value="ENSMUSP00000136621.3"/>
    <property type="gene ID" value="ENSMUSG00000040836.16"/>
</dbReference>
<dbReference type="GeneID" id="240888"/>
<dbReference type="KEGG" id="mmu:240888"/>
<dbReference type="UCSC" id="uc007dja.1">
    <molecule id="B2RPY5-3"/>
    <property type="organism name" value="mouse"/>
</dbReference>
<dbReference type="UCSC" id="uc011wux.1">
    <molecule id="B2RPY5-1"/>
    <property type="organism name" value="mouse"/>
</dbReference>
<dbReference type="AGR" id="MGI:2685054"/>
<dbReference type="CTD" id="23432"/>
<dbReference type="MGI" id="MGI:2685054">
    <property type="gene designation" value="Gpr161"/>
</dbReference>
<dbReference type="VEuPathDB" id="HostDB:ENSMUSG00000040836"/>
<dbReference type="eggNOG" id="KOG3656">
    <property type="taxonomic scope" value="Eukaryota"/>
</dbReference>
<dbReference type="GeneTree" id="ENSGT00940000157829"/>
<dbReference type="InParanoid" id="B2RPY5"/>
<dbReference type="OrthoDB" id="5980076at2759"/>
<dbReference type="PhylomeDB" id="B2RPY5"/>
<dbReference type="TreeFam" id="TF331895"/>
<dbReference type="Reactome" id="R-MMU-5610787">
    <property type="pathway name" value="Hedgehog 'off' state"/>
</dbReference>
<dbReference type="Reactome" id="R-MMU-5632684">
    <property type="pathway name" value="Hedgehog 'on' state"/>
</dbReference>
<dbReference type="BioGRID-ORCS" id="240888">
    <property type="hits" value="0 hits in 55 CRISPR screens"/>
</dbReference>
<dbReference type="ChiTaRS" id="Gpr161">
    <property type="organism name" value="mouse"/>
</dbReference>
<dbReference type="PRO" id="PR:B2RPY5"/>
<dbReference type="Proteomes" id="UP000000589">
    <property type="component" value="Chromosome 1"/>
</dbReference>
<dbReference type="RNAct" id="B2RPY5">
    <property type="molecule type" value="protein"/>
</dbReference>
<dbReference type="Bgee" id="ENSMUSG00000040836">
    <property type="expression patterns" value="Expressed in cleaving embryo and 178 other cell types or tissues"/>
</dbReference>
<dbReference type="ExpressionAtlas" id="B2RPY5">
    <property type="expression patterns" value="baseline and differential"/>
</dbReference>
<dbReference type="GO" id="GO:0060170">
    <property type="term" value="C:ciliary membrane"/>
    <property type="evidence" value="ECO:0007669"/>
    <property type="project" value="UniProtKB-SubCell"/>
</dbReference>
<dbReference type="GO" id="GO:0005929">
    <property type="term" value="C:cilium"/>
    <property type="evidence" value="ECO:0000314"/>
    <property type="project" value="UniProtKB"/>
</dbReference>
<dbReference type="GO" id="GO:0097386">
    <property type="term" value="C:glial cell projection"/>
    <property type="evidence" value="ECO:0000314"/>
    <property type="project" value="MGI"/>
</dbReference>
<dbReference type="GO" id="GO:0043005">
    <property type="term" value="C:neuron projection"/>
    <property type="evidence" value="ECO:0000314"/>
    <property type="project" value="MGI"/>
</dbReference>
<dbReference type="GO" id="GO:0055037">
    <property type="term" value="C:recycling endosome"/>
    <property type="evidence" value="ECO:0000314"/>
    <property type="project" value="UniProtKB"/>
</dbReference>
<dbReference type="GO" id="GO:0004930">
    <property type="term" value="F:G protein-coupled receptor activity"/>
    <property type="evidence" value="ECO:0000314"/>
    <property type="project" value="UniProtKB"/>
</dbReference>
<dbReference type="GO" id="GO:0007189">
    <property type="term" value="P:adenylate cyclase-activating G protein-coupled receptor signaling pathway"/>
    <property type="evidence" value="ECO:0000314"/>
    <property type="project" value="UniProtKB"/>
</dbReference>
<dbReference type="GO" id="GO:1901621">
    <property type="term" value="P:negative regulation of smoothened signaling pathway involved in dorsal/ventral neural tube patterning"/>
    <property type="evidence" value="ECO:0000315"/>
    <property type="project" value="UniProtKB"/>
</dbReference>
<dbReference type="CDD" id="cd15214">
    <property type="entry name" value="7tmA_GPR161"/>
    <property type="match status" value="1"/>
</dbReference>
<dbReference type="FunFam" id="1.20.1070.10:FF:000091">
    <property type="entry name" value="G-protein coupled receptor 161"/>
    <property type="match status" value="1"/>
</dbReference>
<dbReference type="Gene3D" id="1.20.1070.10">
    <property type="entry name" value="Rhodopsin 7-helix transmembrane proteins"/>
    <property type="match status" value="1"/>
</dbReference>
<dbReference type="InterPro" id="IPR000276">
    <property type="entry name" value="GPCR_Rhodpsn"/>
</dbReference>
<dbReference type="InterPro" id="IPR017452">
    <property type="entry name" value="GPCR_Rhodpsn_7TM"/>
</dbReference>
<dbReference type="PANTHER" id="PTHR22752">
    <property type="entry name" value="G PROTEIN-COUPLED RECEPTOR"/>
    <property type="match status" value="1"/>
</dbReference>
<dbReference type="PANTHER" id="PTHR22752:SF10">
    <property type="entry name" value="G-PROTEIN COUPLED RECEPTOR 161"/>
    <property type="match status" value="1"/>
</dbReference>
<dbReference type="Pfam" id="PF00001">
    <property type="entry name" value="7tm_1"/>
    <property type="match status" value="1"/>
</dbReference>
<dbReference type="PRINTS" id="PR00237">
    <property type="entry name" value="GPCRRHODOPSN"/>
</dbReference>
<dbReference type="SUPFAM" id="SSF81321">
    <property type="entry name" value="Family A G protein-coupled receptor-like"/>
    <property type="match status" value="1"/>
</dbReference>
<dbReference type="PROSITE" id="PS00237">
    <property type="entry name" value="G_PROTEIN_RECEP_F1_1"/>
    <property type="match status" value="1"/>
</dbReference>
<dbReference type="PROSITE" id="PS50262">
    <property type="entry name" value="G_PROTEIN_RECEP_F1_2"/>
    <property type="match status" value="1"/>
</dbReference>
<proteinExistence type="evidence at protein level"/>
<feature type="chain" id="PRO_0000379073" description="G-protein coupled receptor 161">
    <location>
        <begin position="1"/>
        <end position="545"/>
    </location>
</feature>
<feature type="topological domain" description="Extracellular" evidence="1">
    <location>
        <begin position="1"/>
        <end position="46"/>
    </location>
</feature>
<feature type="transmembrane region" description="Helical; Name=1" evidence="1">
    <location>
        <begin position="47"/>
        <end position="67"/>
    </location>
</feature>
<feature type="topological domain" description="Cytoplasmic" evidence="1">
    <location>
        <begin position="68"/>
        <end position="80"/>
    </location>
</feature>
<feature type="transmembrane region" description="Helical; Name=2" evidence="1">
    <location>
        <begin position="81"/>
        <end position="101"/>
    </location>
</feature>
<feature type="topological domain" description="Extracellular" evidence="1">
    <location>
        <begin position="102"/>
        <end position="117"/>
    </location>
</feature>
<feature type="transmembrane region" description="Helical; Name=3" evidence="1">
    <location>
        <begin position="118"/>
        <end position="139"/>
    </location>
</feature>
<feature type="topological domain" description="Cytoplasmic" evidence="1">
    <location>
        <begin position="140"/>
        <end position="159"/>
    </location>
</feature>
<feature type="transmembrane region" description="Helical; Name=4" evidence="1">
    <location>
        <begin position="160"/>
        <end position="180"/>
    </location>
</feature>
<feature type="topological domain" description="Extracellular" evidence="1">
    <location>
        <begin position="181"/>
        <end position="205"/>
    </location>
</feature>
<feature type="transmembrane region" description="Helical; Name=5" evidence="1">
    <location>
        <begin position="206"/>
        <end position="226"/>
    </location>
</feature>
<feature type="topological domain" description="Cytoplasmic" evidence="1">
    <location>
        <begin position="227"/>
        <end position="285"/>
    </location>
</feature>
<feature type="transmembrane region" description="Helical; Name=6" evidence="1">
    <location>
        <begin position="286"/>
        <end position="306"/>
    </location>
</feature>
<feature type="topological domain" description="Extracellular" evidence="1">
    <location>
        <begin position="307"/>
        <end position="322"/>
    </location>
</feature>
<feature type="transmembrane region" description="Helical; Name=7" evidence="1">
    <location>
        <begin position="323"/>
        <end position="343"/>
    </location>
</feature>
<feature type="topological domain" description="Cytoplasmic" evidence="1">
    <location>
        <begin position="344"/>
        <end position="545"/>
    </location>
</feature>
<feature type="glycosylation site" description="N-linked (GlcNAc...) asparagine" evidence="1">
    <location>
        <position position="21"/>
    </location>
</feature>
<feature type="glycosylation site" description="N-linked (GlcNAc...) asparagine" evidence="1">
    <location>
        <position position="32"/>
    </location>
</feature>
<feature type="glycosylation site" description="N-linked (GlcNAc...) asparagine" evidence="1">
    <location>
        <position position="117"/>
    </location>
</feature>
<feature type="disulfide bond" evidence="2">
    <location>
        <begin position="116"/>
        <end position="194"/>
    </location>
</feature>
<feature type="splice variant" id="VSP_046300" description="In isoform 3." evidence="6">
    <original>MDF</original>
    <variation>MDSHHTTHTLLAVFPV</variation>
    <location>
        <begin position="1"/>
        <end position="3"/>
    </location>
</feature>
<feature type="splice variant" id="VSP_037635" description="In isoform 2." evidence="5">
    <original>M</original>
    <variation>MDFVQHALLTASRGALT</variation>
    <location>
        <position position="1"/>
    </location>
</feature>
<feature type="mutagenesis site" description="Inactive mutant unable to increase cAMP upon induction." evidence="4">
    <original>V</original>
    <variation>E</variation>
    <location>
        <position position="145"/>
    </location>
</feature>
<feature type="mutagenesis site" description="In mut1; abolishes localization to primary cilia." evidence="4">
    <original>VKARK</original>
    <variation>AAAAA</variation>
    <location>
        <begin position="233"/>
        <end position="237"/>
    </location>
</feature>
<feature type="mutagenesis site" description="In mut2; weakly affects localization to primary cilia." evidence="4">
    <original>VHCG</original>
    <variation>AAAA</variation>
    <location>
        <begin position="238"/>
        <end position="241"/>
    </location>
</feature>
<feature type="mutagenesis site" description="In mut3; does not affect localization to primary cilia; when associated with A-251." evidence="4">
    <original>VV</original>
    <variation>AA</variation>
    <location>
        <begin position="243"/>
        <end position="244"/>
    </location>
</feature>
<feature type="mutagenesis site" description="In mut3; does not affect localization to primary cilia; when associated with 243-A-A-244." evidence="4">
    <original>Q</original>
    <variation>A</variation>
    <location>
        <position position="251"/>
    </location>
</feature>
<feature type="mutagenesis site" description="In mut4; does not affect localization to primary cilia." evidence="4">
    <original>GRKN</original>
    <variation>AAAA</variation>
    <location>
        <begin position="254"/>
        <end position="257"/>
    </location>
</feature>
<feature type="mutagenesis site" description="In mut5; does not affect localization to primary cilia." evidence="4">
    <original>SSTST</original>
    <variation>ASAAA</variation>
    <location>
        <begin position="258"/>
        <end position="262"/>
    </location>
</feature>